<dbReference type="EC" id="1.17.7.4" evidence="1"/>
<dbReference type="EMBL" id="AP009178">
    <property type="protein sequence ID" value="BAF69776.1"/>
    <property type="molecule type" value="Genomic_DNA"/>
</dbReference>
<dbReference type="RefSeq" id="WP_012082039.1">
    <property type="nucleotide sequence ID" value="NC_009662.1"/>
</dbReference>
<dbReference type="SMR" id="A6Q2R7"/>
<dbReference type="FunCoup" id="A6Q2R7">
    <property type="interactions" value="399"/>
</dbReference>
<dbReference type="STRING" id="387092.NIS_0662"/>
<dbReference type="KEGG" id="nis:NIS_0662"/>
<dbReference type="eggNOG" id="COG0761">
    <property type="taxonomic scope" value="Bacteria"/>
</dbReference>
<dbReference type="HOGENOM" id="CLU_027486_0_1_7"/>
<dbReference type="InParanoid" id="A6Q2R7"/>
<dbReference type="OrthoDB" id="9804068at2"/>
<dbReference type="UniPathway" id="UPA00056">
    <property type="reaction ID" value="UER00097"/>
</dbReference>
<dbReference type="UniPathway" id="UPA00059">
    <property type="reaction ID" value="UER00105"/>
</dbReference>
<dbReference type="Proteomes" id="UP000001118">
    <property type="component" value="Chromosome"/>
</dbReference>
<dbReference type="GO" id="GO:0051539">
    <property type="term" value="F:4 iron, 4 sulfur cluster binding"/>
    <property type="evidence" value="ECO:0007669"/>
    <property type="project" value="UniProtKB-UniRule"/>
</dbReference>
<dbReference type="GO" id="GO:0051745">
    <property type="term" value="F:4-hydroxy-3-methylbut-2-enyl diphosphate reductase activity"/>
    <property type="evidence" value="ECO:0007669"/>
    <property type="project" value="UniProtKB-UniRule"/>
</dbReference>
<dbReference type="GO" id="GO:0046872">
    <property type="term" value="F:metal ion binding"/>
    <property type="evidence" value="ECO:0007669"/>
    <property type="project" value="UniProtKB-KW"/>
</dbReference>
<dbReference type="GO" id="GO:0050992">
    <property type="term" value="P:dimethylallyl diphosphate biosynthetic process"/>
    <property type="evidence" value="ECO:0007669"/>
    <property type="project" value="UniProtKB-UniRule"/>
</dbReference>
<dbReference type="GO" id="GO:0019288">
    <property type="term" value="P:isopentenyl diphosphate biosynthetic process, methylerythritol 4-phosphate pathway"/>
    <property type="evidence" value="ECO:0007669"/>
    <property type="project" value="UniProtKB-UniRule"/>
</dbReference>
<dbReference type="GO" id="GO:0016114">
    <property type="term" value="P:terpenoid biosynthetic process"/>
    <property type="evidence" value="ECO:0007669"/>
    <property type="project" value="UniProtKB-UniRule"/>
</dbReference>
<dbReference type="CDD" id="cd13944">
    <property type="entry name" value="lytB_ispH"/>
    <property type="match status" value="1"/>
</dbReference>
<dbReference type="Gene3D" id="3.40.50.11270">
    <property type="match status" value="1"/>
</dbReference>
<dbReference type="Gene3D" id="3.40.1010.20">
    <property type="entry name" value="4-hydroxy-3-methylbut-2-enyl diphosphate reductase, catalytic domain"/>
    <property type="match status" value="2"/>
</dbReference>
<dbReference type="HAMAP" id="MF_00191">
    <property type="entry name" value="IspH"/>
    <property type="match status" value="1"/>
</dbReference>
<dbReference type="InterPro" id="IPR003451">
    <property type="entry name" value="LytB/IspH"/>
</dbReference>
<dbReference type="NCBIfam" id="TIGR00216">
    <property type="entry name" value="ispH_lytB"/>
    <property type="match status" value="1"/>
</dbReference>
<dbReference type="NCBIfam" id="NF002187">
    <property type="entry name" value="PRK01045.1-1"/>
    <property type="match status" value="1"/>
</dbReference>
<dbReference type="PANTHER" id="PTHR30426">
    <property type="entry name" value="4-HYDROXY-3-METHYLBUT-2-ENYL DIPHOSPHATE REDUCTASE"/>
    <property type="match status" value="1"/>
</dbReference>
<dbReference type="PANTHER" id="PTHR30426:SF0">
    <property type="entry name" value="4-HYDROXY-3-METHYLBUT-2-ENYL DIPHOSPHATE REDUCTASE"/>
    <property type="match status" value="1"/>
</dbReference>
<dbReference type="Pfam" id="PF02401">
    <property type="entry name" value="LYTB"/>
    <property type="match status" value="1"/>
</dbReference>
<reference key="1">
    <citation type="journal article" date="2007" name="Proc. Natl. Acad. Sci. U.S.A.">
        <title>Deep-sea vent epsilon-proteobacterial genomes provide insights into emergence of pathogens.</title>
        <authorList>
            <person name="Nakagawa S."/>
            <person name="Takaki Y."/>
            <person name="Shimamura S."/>
            <person name="Reysenbach A.-L."/>
            <person name="Takai K."/>
            <person name="Horikoshi K."/>
        </authorList>
    </citation>
    <scope>NUCLEOTIDE SEQUENCE [LARGE SCALE GENOMIC DNA]</scope>
    <source>
        <strain>SB155-2</strain>
    </source>
</reference>
<keyword id="KW-0004">4Fe-4S</keyword>
<keyword id="KW-0408">Iron</keyword>
<keyword id="KW-0411">Iron-sulfur</keyword>
<keyword id="KW-0414">Isoprene biosynthesis</keyword>
<keyword id="KW-0479">Metal-binding</keyword>
<keyword id="KW-0560">Oxidoreductase</keyword>
<keyword id="KW-1185">Reference proteome</keyword>
<organism>
    <name type="scientific">Nitratiruptor sp. (strain SB155-2)</name>
    <dbReference type="NCBI Taxonomy" id="387092"/>
    <lineage>
        <taxon>Bacteria</taxon>
        <taxon>Pseudomonadati</taxon>
        <taxon>Campylobacterota</taxon>
        <taxon>Epsilonproteobacteria</taxon>
        <taxon>Nautiliales</taxon>
        <taxon>Nitratiruptoraceae</taxon>
        <taxon>Nitratiruptor</taxon>
    </lineage>
</organism>
<feature type="chain" id="PRO_1000021143" description="4-hydroxy-3-methylbut-2-enyl diphosphate reductase">
    <location>
        <begin position="1"/>
        <end position="275"/>
    </location>
</feature>
<feature type="active site" description="Proton donor" evidence="1">
    <location>
        <position position="122"/>
    </location>
</feature>
<feature type="binding site" evidence="1">
    <location>
        <position position="12"/>
    </location>
    <ligand>
        <name>[4Fe-4S] cluster</name>
        <dbReference type="ChEBI" id="CHEBI:49883"/>
    </ligand>
</feature>
<feature type="binding site" evidence="1">
    <location>
        <position position="36"/>
    </location>
    <ligand>
        <name>(2E)-4-hydroxy-3-methylbut-2-enyl diphosphate</name>
        <dbReference type="ChEBI" id="CHEBI:128753"/>
    </ligand>
</feature>
<feature type="binding site" evidence="1">
    <location>
        <position position="36"/>
    </location>
    <ligand>
        <name>dimethylallyl diphosphate</name>
        <dbReference type="ChEBI" id="CHEBI:57623"/>
    </ligand>
</feature>
<feature type="binding site" evidence="1">
    <location>
        <position position="36"/>
    </location>
    <ligand>
        <name>isopentenyl diphosphate</name>
        <dbReference type="ChEBI" id="CHEBI:128769"/>
    </ligand>
</feature>
<feature type="binding site" evidence="1">
    <location>
        <position position="70"/>
    </location>
    <ligand>
        <name>(2E)-4-hydroxy-3-methylbut-2-enyl diphosphate</name>
        <dbReference type="ChEBI" id="CHEBI:128753"/>
    </ligand>
</feature>
<feature type="binding site" evidence="1">
    <location>
        <position position="70"/>
    </location>
    <ligand>
        <name>dimethylallyl diphosphate</name>
        <dbReference type="ChEBI" id="CHEBI:57623"/>
    </ligand>
</feature>
<feature type="binding site" evidence="1">
    <location>
        <position position="70"/>
    </location>
    <ligand>
        <name>isopentenyl diphosphate</name>
        <dbReference type="ChEBI" id="CHEBI:128769"/>
    </ligand>
</feature>
<feature type="binding site" evidence="1">
    <location>
        <position position="92"/>
    </location>
    <ligand>
        <name>[4Fe-4S] cluster</name>
        <dbReference type="ChEBI" id="CHEBI:49883"/>
    </ligand>
</feature>
<feature type="binding site" evidence="1">
    <location>
        <position position="120"/>
    </location>
    <ligand>
        <name>(2E)-4-hydroxy-3-methylbut-2-enyl diphosphate</name>
        <dbReference type="ChEBI" id="CHEBI:128753"/>
    </ligand>
</feature>
<feature type="binding site" evidence="1">
    <location>
        <position position="120"/>
    </location>
    <ligand>
        <name>dimethylallyl diphosphate</name>
        <dbReference type="ChEBI" id="CHEBI:57623"/>
    </ligand>
</feature>
<feature type="binding site" evidence="1">
    <location>
        <position position="120"/>
    </location>
    <ligand>
        <name>isopentenyl diphosphate</name>
        <dbReference type="ChEBI" id="CHEBI:128769"/>
    </ligand>
</feature>
<feature type="binding site" evidence="1">
    <location>
        <position position="157"/>
    </location>
    <ligand>
        <name>(2E)-4-hydroxy-3-methylbut-2-enyl diphosphate</name>
        <dbReference type="ChEBI" id="CHEBI:128753"/>
    </ligand>
</feature>
<feature type="binding site" evidence="1">
    <location>
        <position position="185"/>
    </location>
    <ligand>
        <name>[4Fe-4S] cluster</name>
        <dbReference type="ChEBI" id="CHEBI:49883"/>
    </ligand>
</feature>
<feature type="binding site" evidence="1">
    <location>
        <position position="213"/>
    </location>
    <ligand>
        <name>(2E)-4-hydroxy-3-methylbut-2-enyl diphosphate</name>
        <dbReference type="ChEBI" id="CHEBI:128753"/>
    </ligand>
</feature>
<feature type="binding site" evidence="1">
    <location>
        <position position="213"/>
    </location>
    <ligand>
        <name>dimethylallyl diphosphate</name>
        <dbReference type="ChEBI" id="CHEBI:57623"/>
    </ligand>
</feature>
<feature type="binding site" evidence="1">
    <location>
        <position position="213"/>
    </location>
    <ligand>
        <name>isopentenyl diphosphate</name>
        <dbReference type="ChEBI" id="CHEBI:128769"/>
    </ligand>
</feature>
<feature type="binding site" evidence="1">
    <location>
        <position position="214"/>
    </location>
    <ligand>
        <name>(2E)-4-hydroxy-3-methylbut-2-enyl diphosphate</name>
        <dbReference type="ChEBI" id="CHEBI:128753"/>
    </ligand>
</feature>
<feature type="binding site" evidence="1">
    <location>
        <position position="214"/>
    </location>
    <ligand>
        <name>dimethylallyl diphosphate</name>
        <dbReference type="ChEBI" id="CHEBI:57623"/>
    </ligand>
</feature>
<feature type="binding site" evidence="1">
    <location>
        <position position="214"/>
    </location>
    <ligand>
        <name>isopentenyl diphosphate</name>
        <dbReference type="ChEBI" id="CHEBI:128769"/>
    </ligand>
</feature>
<feature type="binding site" evidence="1">
    <location>
        <position position="215"/>
    </location>
    <ligand>
        <name>(2E)-4-hydroxy-3-methylbut-2-enyl diphosphate</name>
        <dbReference type="ChEBI" id="CHEBI:128753"/>
    </ligand>
</feature>
<feature type="binding site" evidence="1">
    <location>
        <position position="215"/>
    </location>
    <ligand>
        <name>dimethylallyl diphosphate</name>
        <dbReference type="ChEBI" id="CHEBI:57623"/>
    </ligand>
</feature>
<feature type="binding site" evidence="1">
    <location>
        <position position="215"/>
    </location>
    <ligand>
        <name>isopentenyl diphosphate</name>
        <dbReference type="ChEBI" id="CHEBI:128769"/>
    </ligand>
</feature>
<feature type="binding site" evidence="1">
    <location>
        <position position="257"/>
    </location>
    <ligand>
        <name>(2E)-4-hydroxy-3-methylbut-2-enyl diphosphate</name>
        <dbReference type="ChEBI" id="CHEBI:128753"/>
    </ligand>
</feature>
<feature type="binding site" evidence="1">
    <location>
        <position position="257"/>
    </location>
    <ligand>
        <name>dimethylallyl diphosphate</name>
        <dbReference type="ChEBI" id="CHEBI:57623"/>
    </ligand>
</feature>
<feature type="binding site" evidence="1">
    <location>
        <position position="257"/>
    </location>
    <ligand>
        <name>isopentenyl diphosphate</name>
        <dbReference type="ChEBI" id="CHEBI:128769"/>
    </ligand>
</feature>
<evidence type="ECO:0000255" key="1">
    <source>
        <dbReference type="HAMAP-Rule" id="MF_00191"/>
    </source>
</evidence>
<protein>
    <recommendedName>
        <fullName evidence="1">4-hydroxy-3-methylbut-2-enyl diphosphate reductase</fullName>
        <shortName evidence="1">HMBPP reductase</shortName>
        <ecNumber evidence="1">1.17.7.4</ecNumber>
    </recommendedName>
</protein>
<accession>A6Q2R7</accession>
<sequence>MEIRLAKSYGFCFGVKRAIKIAEESPNSVTFGPLIHNKNEIDRLKEKYNVELVEEIDEIQENSRVVIRTHGIPKEKLALLKEKNVEVIDATCPFVTKPQEIVSKMSEEGYSIVIFGDINHPEIKGVMSYATDPIVVLSVEELEGKPLKEKVATVAQTTRKFEEYQKIVNYLMEHKKEVRVFNTICNATFENQDAARELSREADIMIIIGGKNSSNTKQLFKICKENCPDSYLVENAKELEKEWFEGKKVCGITAGASTPNWIIEEVIENIKKIQV</sequence>
<comment type="function">
    <text evidence="1">Catalyzes the conversion of 1-hydroxy-2-methyl-2-(E)-butenyl 4-diphosphate (HMBPP) into a mixture of isopentenyl diphosphate (IPP) and dimethylallyl diphosphate (DMAPP). Acts in the terminal step of the DOXP/MEP pathway for isoprenoid precursor biosynthesis.</text>
</comment>
<comment type="catalytic activity">
    <reaction evidence="1">
        <text>isopentenyl diphosphate + 2 oxidized [2Fe-2S]-[ferredoxin] + H2O = (2E)-4-hydroxy-3-methylbut-2-enyl diphosphate + 2 reduced [2Fe-2S]-[ferredoxin] + 2 H(+)</text>
        <dbReference type="Rhea" id="RHEA:24488"/>
        <dbReference type="Rhea" id="RHEA-COMP:10000"/>
        <dbReference type="Rhea" id="RHEA-COMP:10001"/>
        <dbReference type="ChEBI" id="CHEBI:15377"/>
        <dbReference type="ChEBI" id="CHEBI:15378"/>
        <dbReference type="ChEBI" id="CHEBI:33737"/>
        <dbReference type="ChEBI" id="CHEBI:33738"/>
        <dbReference type="ChEBI" id="CHEBI:128753"/>
        <dbReference type="ChEBI" id="CHEBI:128769"/>
        <dbReference type="EC" id="1.17.7.4"/>
    </reaction>
</comment>
<comment type="catalytic activity">
    <reaction evidence="1">
        <text>dimethylallyl diphosphate + 2 oxidized [2Fe-2S]-[ferredoxin] + H2O = (2E)-4-hydroxy-3-methylbut-2-enyl diphosphate + 2 reduced [2Fe-2S]-[ferredoxin] + 2 H(+)</text>
        <dbReference type="Rhea" id="RHEA:24825"/>
        <dbReference type="Rhea" id="RHEA-COMP:10000"/>
        <dbReference type="Rhea" id="RHEA-COMP:10001"/>
        <dbReference type="ChEBI" id="CHEBI:15377"/>
        <dbReference type="ChEBI" id="CHEBI:15378"/>
        <dbReference type="ChEBI" id="CHEBI:33737"/>
        <dbReference type="ChEBI" id="CHEBI:33738"/>
        <dbReference type="ChEBI" id="CHEBI:57623"/>
        <dbReference type="ChEBI" id="CHEBI:128753"/>
        <dbReference type="EC" id="1.17.7.4"/>
    </reaction>
</comment>
<comment type="cofactor">
    <cofactor evidence="1">
        <name>[4Fe-4S] cluster</name>
        <dbReference type="ChEBI" id="CHEBI:49883"/>
    </cofactor>
    <text evidence="1">Binds 1 [4Fe-4S] cluster per subunit.</text>
</comment>
<comment type="pathway">
    <text evidence="1">Isoprenoid biosynthesis; dimethylallyl diphosphate biosynthesis; dimethylallyl diphosphate from (2E)-4-hydroxy-3-methylbutenyl diphosphate: step 1/1.</text>
</comment>
<comment type="pathway">
    <text evidence="1">Isoprenoid biosynthesis; isopentenyl diphosphate biosynthesis via DXP pathway; isopentenyl diphosphate from 1-deoxy-D-xylulose 5-phosphate: step 6/6.</text>
</comment>
<comment type="similarity">
    <text evidence="1">Belongs to the IspH family.</text>
</comment>
<name>ISPH_NITSB</name>
<proteinExistence type="inferred from homology"/>
<gene>
    <name evidence="1" type="primary">ispH</name>
    <name type="ordered locus">NIS_0662</name>
</gene>